<name>LPXK_COXB2</name>
<comment type="function">
    <text evidence="1">Transfers the gamma-phosphate of ATP to the 4'-position of a tetraacyldisaccharide 1-phosphate intermediate (termed DS-1-P) to form tetraacyldisaccharide 1,4'-bis-phosphate (lipid IVA).</text>
</comment>
<comment type="catalytic activity">
    <reaction evidence="1">
        <text>a lipid A disaccharide + ATP = a lipid IVA + ADP + H(+)</text>
        <dbReference type="Rhea" id="RHEA:67840"/>
        <dbReference type="ChEBI" id="CHEBI:15378"/>
        <dbReference type="ChEBI" id="CHEBI:30616"/>
        <dbReference type="ChEBI" id="CHEBI:176343"/>
        <dbReference type="ChEBI" id="CHEBI:176425"/>
        <dbReference type="ChEBI" id="CHEBI:456216"/>
        <dbReference type="EC" id="2.7.1.130"/>
    </reaction>
</comment>
<comment type="pathway">
    <text evidence="1">Glycolipid biosynthesis; lipid IV(A) biosynthesis; lipid IV(A) from (3R)-3-hydroxytetradecanoyl-[acyl-carrier-protein] and UDP-N-acetyl-alpha-D-glucosamine: step 6/6.</text>
</comment>
<comment type="similarity">
    <text evidence="1">Belongs to the LpxK family.</text>
</comment>
<proteinExistence type="inferred from homology"/>
<protein>
    <recommendedName>
        <fullName evidence="1">Tetraacyldisaccharide 4'-kinase</fullName>
        <ecNumber evidence="1">2.7.1.130</ecNumber>
    </recommendedName>
    <alternativeName>
        <fullName evidence="1">Lipid A 4'-kinase</fullName>
    </alternativeName>
</protein>
<gene>
    <name evidence="1" type="primary">lpxK</name>
    <name type="ordered locus">CbuG_1144</name>
</gene>
<feature type="chain" id="PRO_1000191529" description="Tetraacyldisaccharide 4'-kinase">
    <location>
        <begin position="1"/>
        <end position="325"/>
    </location>
</feature>
<feature type="binding site" evidence="1">
    <location>
        <begin position="58"/>
        <end position="65"/>
    </location>
    <ligand>
        <name>ATP</name>
        <dbReference type="ChEBI" id="CHEBI:30616"/>
    </ligand>
</feature>
<evidence type="ECO:0000255" key="1">
    <source>
        <dbReference type="HAMAP-Rule" id="MF_00409"/>
    </source>
</evidence>
<reference key="1">
    <citation type="journal article" date="2009" name="Infect. Immun.">
        <title>Comparative genomics reveal extensive transposon-mediated genomic plasticity and diversity among potential effector proteins within the genus Coxiella.</title>
        <authorList>
            <person name="Beare P.A."/>
            <person name="Unsworth N."/>
            <person name="Andoh M."/>
            <person name="Voth D.E."/>
            <person name="Omsland A."/>
            <person name="Gilk S.D."/>
            <person name="Williams K.P."/>
            <person name="Sobral B.W."/>
            <person name="Kupko J.J. III"/>
            <person name="Porcella S.F."/>
            <person name="Samuel J.E."/>
            <person name="Heinzen R.A."/>
        </authorList>
    </citation>
    <scope>NUCLEOTIDE SEQUENCE [LARGE SCALE GENOMIC DNA]</scope>
    <source>
        <strain>CbuG_Q212</strain>
    </source>
</reference>
<keyword id="KW-0067">ATP-binding</keyword>
<keyword id="KW-0418">Kinase</keyword>
<keyword id="KW-0441">Lipid A biosynthesis</keyword>
<keyword id="KW-0444">Lipid biosynthesis</keyword>
<keyword id="KW-0443">Lipid metabolism</keyword>
<keyword id="KW-0547">Nucleotide-binding</keyword>
<keyword id="KW-0808">Transferase</keyword>
<accession>B6J0K1</accession>
<dbReference type="EC" id="2.7.1.130" evidence="1"/>
<dbReference type="EMBL" id="CP001019">
    <property type="protein sequence ID" value="ACJ18479.1"/>
    <property type="molecule type" value="Genomic_DNA"/>
</dbReference>
<dbReference type="RefSeq" id="WP_012570113.1">
    <property type="nucleotide sequence ID" value="NC_011527.1"/>
</dbReference>
<dbReference type="SMR" id="B6J0K1"/>
<dbReference type="KEGG" id="cbg:CbuG_1144"/>
<dbReference type="HOGENOM" id="CLU_038816_2_0_6"/>
<dbReference type="UniPathway" id="UPA00359">
    <property type="reaction ID" value="UER00482"/>
</dbReference>
<dbReference type="GO" id="GO:0005886">
    <property type="term" value="C:plasma membrane"/>
    <property type="evidence" value="ECO:0007669"/>
    <property type="project" value="TreeGrafter"/>
</dbReference>
<dbReference type="GO" id="GO:0005524">
    <property type="term" value="F:ATP binding"/>
    <property type="evidence" value="ECO:0007669"/>
    <property type="project" value="UniProtKB-UniRule"/>
</dbReference>
<dbReference type="GO" id="GO:0009029">
    <property type="term" value="F:tetraacyldisaccharide 4'-kinase activity"/>
    <property type="evidence" value="ECO:0007669"/>
    <property type="project" value="UniProtKB-UniRule"/>
</dbReference>
<dbReference type="GO" id="GO:0009245">
    <property type="term" value="P:lipid A biosynthetic process"/>
    <property type="evidence" value="ECO:0007669"/>
    <property type="project" value="UniProtKB-UniRule"/>
</dbReference>
<dbReference type="GO" id="GO:0009244">
    <property type="term" value="P:lipopolysaccharide core region biosynthetic process"/>
    <property type="evidence" value="ECO:0007669"/>
    <property type="project" value="TreeGrafter"/>
</dbReference>
<dbReference type="CDD" id="cd01983">
    <property type="entry name" value="SIMIBI"/>
    <property type="match status" value="1"/>
</dbReference>
<dbReference type="HAMAP" id="MF_00409">
    <property type="entry name" value="LpxK"/>
    <property type="match status" value="1"/>
</dbReference>
<dbReference type="InterPro" id="IPR003758">
    <property type="entry name" value="LpxK"/>
</dbReference>
<dbReference type="InterPro" id="IPR027417">
    <property type="entry name" value="P-loop_NTPase"/>
</dbReference>
<dbReference type="NCBIfam" id="TIGR00682">
    <property type="entry name" value="lpxK"/>
    <property type="match status" value="1"/>
</dbReference>
<dbReference type="PANTHER" id="PTHR42724">
    <property type="entry name" value="TETRAACYLDISACCHARIDE 4'-KINASE"/>
    <property type="match status" value="1"/>
</dbReference>
<dbReference type="PANTHER" id="PTHR42724:SF1">
    <property type="entry name" value="TETRAACYLDISACCHARIDE 4'-KINASE, MITOCHONDRIAL-RELATED"/>
    <property type="match status" value="1"/>
</dbReference>
<dbReference type="Pfam" id="PF02606">
    <property type="entry name" value="LpxK"/>
    <property type="match status" value="1"/>
</dbReference>
<dbReference type="SUPFAM" id="SSF52540">
    <property type="entry name" value="P-loop containing nucleoside triphosphate hydrolases"/>
    <property type="match status" value="1"/>
</dbReference>
<organism>
    <name type="scientific">Coxiella burnetii (strain CbuG_Q212)</name>
    <name type="common">Coxiella burnetii (strain Q212)</name>
    <dbReference type="NCBI Taxonomy" id="434923"/>
    <lineage>
        <taxon>Bacteria</taxon>
        <taxon>Pseudomonadati</taxon>
        <taxon>Pseudomonadota</taxon>
        <taxon>Gammaproteobacteria</taxon>
        <taxon>Legionellales</taxon>
        <taxon>Coxiellaceae</taxon>
        <taxon>Coxiella</taxon>
    </lineage>
</organism>
<sequence length="325" mass="36863">MLKAPRFWYQPRSLLGGILSPFSFLYQIIVRIRRGLYAVGLKKISKFPVSIVIVGNITVGGSGKTPFVIWLANELKNRGFRPGVVSRGYGGKANRFPQTVTENSDPLQVGDEAVLLMKKIDCPMVVCRDRGAAVKHLLRNFQCDVVIGDDGLQHYSLGRDLEIALLDDRHLGNGRCLPAGPLREPKSRLNTVDFVVPKQLRPNEIYQLKNPAKKIDFNELKELTVHAVAGIGNPGYFFKQLETLGANVIAHPFRDHYFYRSEDFNFDDDHLIILTEKDAIKCKQFDDERLFCFSVDAVVPDQFQNDFFRLISNIILRKQAQREGI</sequence>